<organism>
    <name type="scientific">Serratia proteamaculans (strain 568)</name>
    <dbReference type="NCBI Taxonomy" id="399741"/>
    <lineage>
        <taxon>Bacteria</taxon>
        <taxon>Pseudomonadati</taxon>
        <taxon>Pseudomonadota</taxon>
        <taxon>Gammaproteobacteria</taxon>
        <taxon>Enterobacterales</taxon>
        <taxon>Yersiniaceae</taxon>
        <taxon>Serratia</taxon>
    </lineage>
</organism>
<feature type="chain" id="PRO_1000058053" description="Phosphoglycerate kinase">
    <location>
        <begin position="1"/>
        <end position="386"/>
    </location>
</feature>
<feature type="binding site" evidence="1">
    <location>
        <begin position="21"/>
        <end position="23"/>
    </location>
    <ligand>
        <name>substrate</name>
    </ligand>
</feature>
<feature type="binding site" evidence="1">
    <location>
        <position position="36"/>
    </location>
    <ligand>
        <name>substrate</name>
    </ligand>
</feature>
<feature type="binding site" evidence="1">
    <location>
        <begin position="59"/>
        <end position="62"/>
    </location>
    <ligand>
        <name>substrate</name>
    </ligand>
</feature>
<feature type="binding site" evidence="1">
    <location>
        <position position="113"/>
    </location>
    <ligand>
        <name>substrate</name>
    </ligand>
</feature>
<feature type="binding site" evidence="1">
    <location>
        <position position="146"/>
    </location>
    <ligand>
        <name>substrate</name>
    </ligand>
</feature>
<feature type="binding site" evidence="1">
    <location>
        <position position="197"/>
    </location>
    <ligand>
        <name>ATP</name>
        <dbReference type="ChEBI" id="CHEBI:30616"/>
    </ligand>
</feature>
<feature type="binding site" evidence="1">
    <location>
        <position position="313"/>
    </location>
    <ligand>
        <name>ATP</name>
        <dbReference type="ChEBI" id="CHEBI:30616"/>
    </ligand>
</feature>
<feature type="binding site" evidence="1">
    <location>
        <begin position="339"/>
        <end position="342"/>
    </location>
    <ligand>
        <name>ATP</name>
        <dbReference type="ChEBI" id="CHEBI:30616"/>
    </ligand>
</feature>
<evidence type="ECO:0000255" key="1">
    <source>
        <dbReference type="HAMAP-Rule" id="MF_00145"/>
    </source>
</evidence>
<reference key="1">
    <citation type="submission" date="2007-09" db="EMBL/GenBank/DDBJ databases">
        <title>Complete sequence of chromosome of Serratia proteamaculans 568.</title>
        <authorList>
            <consortium name="US DOE Joint Genome Institute"/>
            <person name="Copeland A."/>
            <person name="Lucas S."/>
            <person name="Lapidus A."/>
            <person name="Barry K."/>
            <person name="Glavina del Rio T."/>
            <person name="Dalin E."/>
            <person name="Tice H."/>
            <person name="Pitluck S."/>
            <person name="Chain P."/>
            <person name="Malfatti S."/>
            <person name="Shin M."/>
            <person name="Vergez L."/>
            <person name="Schmutz J."/>
            <person name="Larimer F."/>
            <person name="Land M."/>
            <person name="Hauser L."/>
            <person name="Kyrpides N."/>
            <person name="Kim E."/>
            <person name="Taghavi S."/>
            <person name="Newman L."/>
            <person name="Vangronsveld J."/>
            <person name="van der Lelie D."/>
            <person name="Richardson P."/>
        </authorList>
    </citation>
    <scope>NUCLEOTIDE SEQUENCE [LARGE SCALE GENOMIC DNA]</scope>
    <source>
        <strain>568</strain>
    </source>
</reference>
<name>PGK_SERP5</name>
<dbReference type="EC" id="2.7.2.3" evidence="1"/>
<dbReference type="EMBL" id="CP000826">
    <property type="protein sequence ID" value="ABV43040.1"/>
    <property type="molecule type" value="Genomic_DNA"/>
</dbReference>
<dbReference type="SMR" id="A8GIV0"/>
<dbReference type="STRING" id="399741.Spro_3945"/>
<dbReference type="KEGG" id="spe:Spro_3945"/>
<dbReference type="eggNOG" id="COG0126">
    <property type="taxonomic scope" value="Bacteria"/>
</dbReference>
<dbReference type="HOGENOM" id="CLU_025427_0_2_6"/>
<dbReference type="OrthoDB" id="9808460at2"/>
<dbReference type="UniPathway" id="UPA00109">
    <property type="reaction ID" value="UER00185"/>
</dbReference>
<dbReference type="GO" id="GO:0005829">
    <property type="term" value="C:cytosol"/>
    <property type="evidence" value="ECO:0007669"/>
    <property type="project" value="TreeGrafter"/>
</dbReference>
<dbReference type="GO" id="GO:0043531">
    <property type="term" value="F:ADP binding"/>
    <property type="evidence" value="ECO:0007669"/>
    <property type="project" value="TreeGrafter"/>
</dbReference>
<dbReference type="GO" id="GO:0005524">
    <property type="term" value="F:ATP binding"/>
    <property type="evidence" value="ECO:0007669"/>
    <property type="project" value="UniProtKB-KW"/>
</dbReference>
<dbReference type="GO" id="GO:0004618">
    <property type="term" value="F:phosphoglycerate kinase activity"/>
    <property type="evidence" value="ECO:0007669"/>
    <property type="project" value="UniProtKB-UniRule"/>
</dbReference>
<dbReference type="GO" id="GO:0006094">
    <property type="term" value="P:gluconeogenesis"/>
    <property type="evidence" value="ECO:0007669"/>
    <property type="project" value="TreeGrafter"/>
</dbReference>
<dbReference type="GO" id="GO:0006096">
    <property type="term" value="P:glycolytic process"/>
    <property type="evidence" value="ECO:0007669"/>
    <property type="project" value="UniProtKB-UniRule"/>
</dbReference>
<dbReference type="FunFam" id="3.40.50.1260:FF:000001">
    <property type="entry name" value="Phosphoglycerate kinase"/>
    <property type="match status" value="1"/>
</dbReference>
<dbReference type="Gene3D" id="3.40.50.1260">
    <property type="entry name" value="Phosphoglycerate kinase, N-terminal domain"/>
    <property type="match status" value="2"/>
</dbReference>
<dbReference type="HAMAP" id="MF_00145">
    <property type="entry name" value="Phosphoglyc_kinase"/>
    <property type="match status" value="1"/>
</dbReference>
<dbReference type="InterPro" id="IPR001576">
    <property type="entry name" value="Phosphoglycerate_kinase"/>
</dbReference>
<dbReference type="InterPro" id="IPR015911">
    <property type="entry name" value="Phosphoglycerate_kinase_CS"/>
</dbReference>
<dbReference type="InterPro" id="IPR015824">
    <property type="entry name" value="Phosphoglycerate_kinase_N"/>
</dbReference>
<dbReference type="InterPro" id="IPR036043">
    <property type="entry name" value="Phosphoglycerate_kinase_sf"/>
</dbReference>
<dbReference type="PANTHER" id="PTHR11406">
    <property type="entry name" value="PHOSPHOGLYCERATE KINASE"/>
    <property type="match status" value="1"/>
</dbReference>
<dbReference type="PANTHER" id="PTHR11406:SF23">
    <property type="entry name" value="PHOSPHOGLYCERATE KINASE 1, CHLOROPLASTIC-RELATED"/>
    <property type="match status" value="1"/>
</dbReference>
<dbReference type="Pfam" id="PF00162">
    <property type="entry name" value="PGK"/>
    <property type="match status" value="1"/>
</dbReference>
<dbReference type="PIRSF" id="PIRSF000724">
    <property type="entry name" value="Pgk"/>
    <property type="match status" value="1"/>
</dbReference>
<dbReference type="PRINTS" id="PR00477">
    <property type="entry name" value="PHGLYCKINASE"/>
</dbReference>
<dbReference type="SUPFAM" id="SSF53748">
    <property type="entry name" value="Phosphoglycerate kinase"/>
    <property type="match status" value="1"/>
</dbReference>
<dbReference type="PROSITE" id="PS00111">
    <property type="entry name" value="PGLYCERATE_KINASE"/>
    <property type="match status" value="1"/>
</dbReference>
<sequence>MSVINMSDLDLAGKRVLIRSDLNVPVKDGKVTSDARIRASLPTIEAALKQGARVMVTSHLGRPTEGEYNEEFSLLPVVNYLKEHLKNPVRLAKDYLEGVDVAEGELVVLENVRFNKGEKKDDETLSKKYAALCDVYVMDAFGTAHRAQASTHGVGKFAPVACAGPLLSAELEALGKALKSPARPMVAVVGGSKVSTKFDVLNSLVKIADTVIVGGGIANTFVAIDNNVGKSLYEPDFVDAARKLRDEFKIPVPTDSRVGTEFSETAPATLKKVSEVNDDEEIMDFGDETALAMAKLLKEAKTILWNGPVGVFEFPNFRKGTEIVARAIADSEAFSIAGGGDTLAAIDLFGIEDKISYISTGGGAFLEFVEGKALPAVVMLEERAKQ</sequence>
<accession>A8GIV0</accession>
<proteinExistence type="inferred from homology"/>
<protein>
    <recommendedName>
        <fullName evidence="1">Phosphoglycerate kinase</fullName>
        <ecNumber evidence="1">2.7.2.3</ecNumber>
    </recommendedName>
</protein>
<comment type="catalytic activity">
    <reaction evidence="1">
        <text>(2R)-3-phosphoglycerate + ATP = (2R)-3-phospho-glyceroyl phosphate + ADP</text>
        <dbReference type="Rhea" id="RHEA:14801"/>
        <dbReference type="ChEBI" id="CHEBI:30616"/>
        <dbReference type="ChEBI" id="CHEBI:57604"/>
        <dbReference type="ChEBI" id="CHEBI:58272"/>
        <dbReference type="ChEBI" id="CHEBI:456216"/>
        <dbReference type="EC" id="2.7.2.3"/>
    </reaction>
</comment>
<comment type="pathway">
    <text evidence="1">Carbohydrate degradation; glycolysis; pyruvate from D-glyceraldehyde 3-phosphate: step 2/5.</text>
</comment>
<comment type="subunit">
    <text evidence="1">Monomer.</text>
</comment>
<comment type="subcellular location">
    <subcellularLocation>
        <location evidence="1">Cytoplasm</location>
    </subcellularLocation>
</comment>
<comment type="similarity">
    <text evidence="1">Belongs to the phosphoglycerate kinase family.</text>
</comment>
<gene>
    <name evidence="1" type="primary">pgk</name>
    <name type="ordered locus">Spro_3945</name>
</gene>
<keyword id="KW-0067">ATP-binding</keyword>
<keyword id="KW-0963">Cytoplasm</keyword>
<keyword id="KW-0324">Glycolysis</keyword>
<keyword id="KW-0418">Kinase</keyword>
<keyword id="KW-0547">Nucleotide-binding</keyword>
<keyword id="KW-0808">Transferase</keyword>